<reference key="1">
    <citation type="journal article" date="2002" name="Nature">
        <title>The genome sequence of Schizosaccharomyces pombe.</title>
        <authorList>
            <person name="Wood V."/>
            <person name="Gwilliam R."/>
            <person name="Rajandream M.A."/>
            <person name="Lyne M.H."/>
            <person name="Lyne R."/>
            <person name="Stewart A."/>
            <person name="Sgouros J.G."/>
            <person name="Peat N."/>
            <person name="Hayles J."/>
            <person name="Baker S.G."/>
            <person name="Basham D."/>
            <person name="Bowman S."/>
            <person name="Brooks K."/>
            <person name="Brown D."/>
            <person name="Brown S."/>
            <person name="Chillingworth T."/>
            <person name="Churcher C.M."/>
            <person name="Collins M."/>
            <person name="Connor R."/>
            <person name="Cronin A."/>
            <person name="Davis P."/>
            <person name="Feltwell T."/>
            <person name="Fraser A."/>
            <person name="Gentles S."/>
            <person name="Goble A."/>
            <person name="Hamlin N."/>
            <person name="Harris D.E."/>
            <person name="Hidalgo J."/>
            <person name="Hodgson G."/>
            <person name="Holroyd S."/>
            <person name="Hornsby T."/>
            <person name="Howarth S."/>
            <person name="Huckle E.J."/>
            <person name="Hunt S."/>
            <person name="Jagels K."/>
            <person name="James K.D."/>
            <person name="Jones L."/>
            <person name="Jones M."/>
            <person name="Leather S."/>
            <person name="McDonald S."/>
            <person name="McLean J."/>
            <person name="Mooney P."/>
            <person name="Moule S."/>
            <person name="Mungall K.L."/>
            <person name="Murphy L.D."/>
            <person name="Niblett D."/>
            <person name="Odell C."/>
            <person name="Oliver K."/>
            <person name="O'Neil S."/>
            <person name="Pearson D."/>
            <person name="Quail M.A."/>
            <person name="Rabbinowitsch E."/>
            <person name="Rutherford K.M."/>
            <person name="Rutter S."/>
            <person name="Saunders D."/>
            <person name="Seeger K."/>
            <person name="Sharp S."/>
            <person name="Skelton J."/>
            <person name="Simmonds M.N."/>
            <person name="Squares R."/>
            <person name="Squares S."/>
            <person name="Stevens K."/>
            <person name="Taylor K."/>
            <person name="Taylor R.G."/>
            <person name="Tivey A."/>
            <person name="Walsh S.V."/>
            <person name="Warren T."/>
            <person name="Whitehead S."/>
            <person name="Woodward J.R."/>
            <person name="Volckaert G."/>
            <person name="Aert R."/>
            <person name="Robben J."/>
            <person name="Grymonprez B."/>
            <person name="Weltjens I."/>
            <person name="Vanstreels E."/>
            <person name="Rieger M."/>
            <person name="Schaefer M."/>
            <person name="Mueller-Auer S."/>
            <person name="Gabel C."/>
            <person name="Fuchs M."/>
            <person name="Duesterhoeft A."/>
            <person name="Fritzc C."/>
            <person name="Holzer E."/>
            <person name="Moestl D."/>
            <person name="Hilbert H."/>
            <person name="Borzym K."/>
            <person name="Langer I."/>
            <person name="Beck A."/>
            <person name="Lehrach H."/>
            <person name="Reinhardt R."/>
            <person name="Pohl T.M."/>
            <person name="Eger P."/>
            <person name="Zimmermann W."/>
            <person name="Wedler H."/>
            <person name="Wambutt R."/>
            <person name="Purnelle B."/>
            <person name="Goffeau A."/>
            <person name="Cadieu E."/>
            <person name="Dreano S."/>
            <person name="Gloux S."/>
            <person name="Lelaure V."/>
            <person name="Mottier S."/>
            <person name="Galibert F."/>
            <person name="Aves S.J."/>
            <person name="Xiang Z."/>
            <person name="Hunt C."/>
            <person name="Moore K."/>
            <person name="Hurst S.M."/>
            <person name="Lucas M."/>
            <person name="Rochet M."/>
            <person name="Gaillardin C."/>
            <person name="Tallada V.A."/>
            <person name="Garzon A."/>
            <person name="Thode G."/>
            <person name="Daga R.R."/>
            <person name="Cruzado L."/>
            <person name="Jimenez J."/>
            <person name="Sanchez M."/>
            <person name="del Rey F."/>
            <person name="Benito J."/>
            <person name="Dominguez A."/>
            <person name="Revuelta J.L."/>
            <person name="Moreno S."/>
            <person name="Armstrong J."/>
            <person name="Forsburg S.L."/>
            <person name="Cerutti L."/>
            <person name="Lowe T."/>
            <person name="McCombie W.R."/>
            <person name="Paulsen I."/>
            <person name="Potashkin J."/>
            <person name="Shpakovski G.V."/>
            <person name="Ussery D."/>
            <person name="Barrell B.G."/>
            <person name="Nurse P."/>
        </authorList>
    </citation>
    <scope>NUCLEOTIDE SEQUENCE [LARGE SCALE GENOMIC DNA]</scope>
    <source>
        <strain>972 / ATCC 24843</strain>
    </source>
</reference>
<name>YI71_SCHPO</name>
<accession>P0CU16</accession>
<accession>Q9P3V8</accession>
<accession>Q9P7U6</accession>
<proteinExistence type="inferred from homology"/>
<evidence type="ECO:0000250" key="1">
    <source>
        <dbReference type="UniProtKB" id="P0CU14"/>
    </source>
</evidence>
<evidence type="ECO:0000255" key="2"/>
<evidence type="ECO:0000305" key="3"/>
<organism>
    <name type="scientific">Schizosaccharomyces pombe (strain 972 / ATCC 24843)</name>
    <name type="common">Fission yeast</name>
    <dbReference type="NCBI Taxonomy" id="284812"/>
    <lineage>
        <taxon>Eukaryota</taxon>
        <taxon>Fungi</taxon>
        <taxon>Dikarya</taxon>
        <taxon>Ascomycota</taxon>
        <taxon>Taphrinomycotina</taxon>
        <taxon>Schizosaccharomycetes</taxon>
        <taxon>Schizosaccharomycetales</taxon>
        <taxon>Schizosaccharomycetaceae</taxon>
        <taxon>Schizosaccharomyces</taxon>
    </lineage>
</organism>
<dbReference type="EMBL" id="CU329670">
    <property type="protein sequence ID" value="CAB69623.1"/>
    <property type="molecule type" value="Genomic_DNA"/>
</dbReference>
<dbReference type="PIR" id="T50274">
    <property type="entry name" value="T50274"/>
</dbReference>
<dbReference type="STRING" id="284812.P0CU16"/>
<dbReference type="PaxDb" id="4896-SPAC977.01.1"/>
<dbReference type="EnsemblFungi" id="SPAC977.01.1">
    <property type="protein sequence ID" value="SPAC977.01.1:pep"/>
    <property type="gene ID" value="SPAC977.01"/>
</dbReference>
<dbReference type="KEGG" id="spo:2543353"/>
<dbReference type="PomBase" id="SPAC977.01"/>
<dbReference type="VEuPathDB" id="FungiDB:SPAC977.01"/>
<dbReference type="InParanoid" id="P0CU16"/>
<dbReference type="Proteomes" id="UP000002485">
    <property type="component" value="Chromosome I"/>
</dbReference>
<dbReference type="GO" id="GO:0005783">
    <property type="term" value="C:endoplasmic reticulum"/>
    <property type="evidence" value="ECO:0007669"/>
    <property type="project" value="UniProtKB-SubCell"/>
</dbReference>
<dbReference type="GO" id="GO:0016020">
    <property type="term" value="C:membrane"/>
    <property type="evidence" value="ECO:0007669"/>
    <property type="project" value="UniProtKB-SubCell"/>
</dbReference>
<dbReference type="InterPro" id="IPR018291">
    <property type="entry name" value="5TM-prot_SCHPO"/>
</dbReference>
<dbReference type="Pfam" id="PF09437">
    <property type="entry name" value="Pombe_5TM"/>
    <property type="match status" value="1"/>
</dbReference>
<sequence>SFAYSGNSESVWTGENITSIWKTILINETGSYCVAARPMTMDGAEFNLDLMGYSVSEDQINNDEIGIWNYISVAEMGGVLLFLSYWIWTCLHFSKIIFPAQKVICLYIFLFALNQTLQECIEEYVFSSECIKYRQFYSVYEIIDFLRTNFYRLFVIYCALGFGITRTVPKYLMIKGISIVIALCSVYWISLYKDVYVVSEIFDMIQYEVSPAIWVYSICHLLKQCTSVTTYENASKARFFRRMLNAFIFIFCASPMLHYLSNIIFGNFDYRLSVIIGDLFTFMEKIAFPCYIMFPTHNEALAYNRNVAEEAQEKMI</sequence>
<protein>
    <recommendedName>
        <fullName>Uncharacterized membrane protein SPAC977.01</fullName>
    </recommendedName>
</protein>
<feature type="chain" id="PRO_0000437235" description="Uncharacterized membrane protein SPAC977.01">
    <location>
        <begin position="1" status="less than"/>
        <end position="316"/>
    </location>
</feature>
<feature type="topological domain" description="Cytoplasmic" evidence="2">
    <location>
        <begin position="1" status="less than"/>
        <end position="70"/>
    </location>
</feature>
<feature type="transmembrane region" description="Helical" evidence="2">
    <location>
        <begin position="71"/>
        <end position="91"/>
    </location>
</feature>
<feature type="topological domain" description="Lumenal" evidence="2">
    <location>
        <position position="92"/>
    </location>
</feature>
<feature type="transmembrane region" description="Helical" evidence="2">
    <location>
        <begin position="93"/>
        <end position="113"/>
    </location>
</feature>
<feature type="topological domain" description="Cytoplasmic" evidence="2">
    <location>
        <begin position="114"/>
        <end position="170"/>
    </location>
</feature>
<feature type="transmembrane region" description="Helical" evidence="2">
    <location>
        <begin position="171"/>
        <end position="191"/>
    </location>
</feature>
<feature type="topological domain" description="Lumenal" evidence="2">
    <location>
        <begin position="192"/>
        <end position="194"/>
    </location>
</feature>
<feature type="transmembrane region" description="Helical" evidence="2">
    <location>
        <begin position="195"/>
        <end position="215"/>
    </location>
</feature>
<feature type="topological domain" description="Cytoplasmic" evidence="2">
    <location>
        <begin position="216"/>
        <end position="245"/>
    </location>
</feature>
<feature type="transmembrane region" description="Helical" evidence="2">
    <location>
        <begin position="246"/>
        <end position="266"/>
    </location>
</feature>
<feature type="topological domain" description="Lumenal" evidence="2">
    <location>
        <begin position="267"/>
        <end position="316"/>
    </location>
</feature>
<feature type="non-terminal residue">
    <location>
        <position position="1"/>
    </location>
</feature>
<comment type="subcellular location">
    <subcellularLocation>
        <location evidence="1">Endoplasmic reticulum</location>
    </subcellularLocation>
    <subcellularLocation>
        <location>Membrane</location>
        <topology evidence="3">Multi-pass membrane protein</topology>
    </subcellularLocation>
</comment>
<comment type="similarity">
    <text evidence="3">Belongs to the UPF0742 family.</text>
</comment>
<comment type="caution">
    <text evidence="3">The annotated sequence does not include a start codon, because it is at the end of an incomplete sub-telomeric contig of the genomic sequence. Data from paralogs suggest an additional 28 residues at the N-terminus, consistent with the SPBC1348.02 (AC P0CU14) annotation.</text>
</comment>
<gene>
    <name type="ORF">SPAC977.01</name>
</gene>
<keyword id="KW-0256">Endoplasmic reticulum</keyword>
<keyword id="KW-0472">Membrane</keyword>
<keyword id="KW-1185">Reference proteome</keyword>
<keyword id="KW-0812">Transmembrane</keyword>
<keyword id="KW-1133">Transmembrane helix</keyword>